<feature type="chain" id="PRO_0000276689" description="Small ribosomal subunit protein uS14c">
    <location>
        <begin position="1"/>
        <end position="100"/>
    </location>
</feature>
<geneLocation type="chloroplast"/>
<accession>Q6EW50</accession>
<keyword id="KW-0150">Chloroplast</keyword>
<keyword id="KW-0934">Plastid</keyword>
<keyword id="KW-0687">Ribonucleoprotein</keyword>
<keyword id="KW-0689">Ribosomal protein</keyword>
<keyword id="KW-0694">RNA-binding</keyword>
<keyword id="KW-0699">rRNA-binding</keyword>
<comment type="function">
    <text evidence="1">Binds 16S rRNA, required for the assembly of 30S particles.</text>
</comment>
<comment type="subunit">
    <text evidence="1">Part of the 30S ribosomal subunit.</text>
</comment>
<comment type="subcellular location">
    <subcellularLocation>
        <location>Plastid</location>
        <location>Chloroplast</location>
    </subcellularLocation>
</comment>
<comment type="similarity">
    <text evidence="1">Belongs to the universal ribosomal protein uS14 family.</text>
</comment>
<sequence>MARKSLIQREKKRQKLEEKYHLIRRSSKKEISKVSSLDEKWEIHVKLQSPPRNSAPIRLHRRCFLTGRPRANYRDFGLSGHVLREMVHACLLPGATRSSW</sequence>
<proteinExistence type="inferred from homology"/>
<dbReference type="EMBL" id="AJ627251">
    <property type="protein sequence ID" value="CAF28591.1"/>
    <property type="molecule type" value="Genomic_DNA"/>
</dbReference>
<dbReference type="RefSeq" id="YP_053153.1">
    <property type="nucleotide sequence ID" value="NC_006050.1"/>
</dbReference>
<dbReference type="SMR" id="Q6EW50"/>
<dbReference type="GeneID" id="2896166"/>
<dbReference type="GO" id="GO:0009507">
    <property type="term" value="C:chloroplast"/>
    <property type="evidence" value="ECO:0007669"/>
    <property type="project" value="UniProtKB-SubCell"/>
</dbReference>
<dbReference type="GO" id="GO:0015935">
    <property type="term" value="C:small ribosomal subunit"/>
    <property type="evidence" value="ECO:0007669"/>
    <property type="project" value="TreeGrafter"/>
</dbReference>
<dbReference type="GO" id="GO:0019843">
    <property type="term" value="F:rRNA binding"/>
    <property type="evidence" value="ECO:0007669"/>
    <property type="project" value="UniProtKB-UniRule"/>
</dbReference>
<dbReference type="GO" id="GO:0003735">
    <property type="term" value="F:structural constituent of ribosome"/>
    <property type="evidence" value="ECO:0007669"/>
    <property type="project" value="InterPro"/>
</dbReference>
<dbReference type="GO" id="GO:0006412">
    <property type="term" value="P:translation"/>
    <property type="evidence" value="ECO:0007669"/>
    <property type="project" value="UniProtKB-UniRule"/>
</dbReference>
<dbReference type="FunFam" id="1.10.287.1480:FF:000001">
    <property type="entry name" value="30S ribosomal protein S14"/>
    <property type="match status" value="1"/>
</dbReference>
<dbReference type="Gene3D" id="1.10.287.1480">
    <property type="match status" value="1"/>
</dbReference>
<dbReference type="HAMAP" id="MF_00537">
    <property type="entry name" value="Ribosomal_uS14_1"/>
    <property type="match status" value="1"/>
</dbReference>
<dbReference type="InterPro" id="IPR001209">
    <property type="entry name" value="Ribosomal_uS14"/>
</dbReference>
<dbReference type="InterPro" id="IPR023036">
    <property type="entry name" value="Ribosomal_uS14_bac/plastid"/>
</dbReference>
<dbReference type="InterPro" id="IPR018271">
    <property type="entry name" value="Ribosomal_uS14_CS"/>
</dbReference>
<dbReference type="NCBIfam" id="NF006477">
    <property type="entry name" value="PRK08881.1"/>
    <property type="match status" value="1"/>
</dbReference>
<dbReference type="PANTHER" id="PTHR19836">
    <property type="entry name" value="30S RIBOSOMAL PROTEIN S14"/>
    <property type="match status" value="1"/>
</dbReference>
<dbReference type="PANTHER" id="PTHR19836:SF19">
    <property type="entry name" value="SMALL RIBOSOMAL SUBUNIT PROTEIN US14M"/>
    <property type="match status" value="1"/>
</dbReference>
<dbReference type="Pfam" id="PF00253">
    <property type="entry name" value="Ribosomal_S14"/>
    <property type="match status" value="1"/>
</dbReference>
<dbReference type="SUPFAM" id="SSF57716">
    <property type="entry name" value="Glucocorticoid receptor-like (DNA-binding domain)"/>
    <property type="match status" value="1"/>
</dbReference>
<dbReference type="PROSITE" id="PS00527">
    <property type="entry name" value="RIBOSOMAL_S14"/>
    <property type="match status" value="1"/>
</dbReference>
<protein>
    <recommendedName>
        <fullName evidence="1">Small ribosomal subunit protein uS14c</fullName>
    </recommendedName>
    <alternativeName>
        <fullName evidence="2">30S ribosomal protein S14, chloroplastic</fullName>
    </alternativeName>
</protein>
<reference key="1">
    <citation type="journal article" date="2004" name="Mol. Biol. Evol.">
        <title>The chloroplast genome of Nymphaea alba: whole-genome analyses and the problem of identifying the most basal angiosperm.</title>
        <authorList>
            <person name="Goremykin V.V."/>
            <person name="Hirsch-Ernst K.I."/>
            <person name="Woelfl S."/>
            <person name="Hellwig F.H."/>
        </authorList>
    </citation>
    <scope>NUCLEOTIDE SEQUENCE [LARGE SCALE GENOMIC DNA]</scope>
</reference>
<name>RR14_NYMAL</name>
<organism>
    <name type="scientific">Nymphaea alba</name>
    <name type="common">White water-lily</name>
    <name type="synonym">Castalia alba</name>
    <dbReference type="NCBI Taxonomy" id="34301"/>
    <lineage>
        <taxon>Eukaryota</taxon>
        <taxon>Viridiplantae</taxon>
        <taxon>Streptophyta</taxon>
        <taxon>Embryophyta</taxon>
        <taxon>Tracheophyta</taxon>
        <taxon>Spermatophyta</taxon>
        <taxon>Magnoliopsida</taxon>
        <taxon>Nymphaeales</taxon>
        <taxon>Nymphaeaceae</taxon>
        <taxon>Nymphaea</taxon>
    </lineage>
</organism>
<gene>
    <name evidence="1" type="primary">rps14</name>
</gene>
<evidence type="ECO:0000255" key="1">
    <source>
        <dbReference type="HAMAP-Rule" id="MF_00537"/>
    </source>
</evidence>
<evidence type="ECO:0000305" key="2"/>